<name>MSHD_THEFY</name>
<dbReference type="EC" id="2.3.1.189" evidence="1"/>
<dbReference type="EMBL" id="CP000088">
    <property type="protein sequence ID" value="AAZ56772.1"/>
    <property type="molecule type" value="Genomic_DNA"/>
</dbReference>
<dbReference type="RefSeq" id="WP_011293162.1">
    <property type="nucleotide sequence ID" value="NC_007333.1"/>
</dbReference>
<dbReference type="SMR" id="Q47LA0"/>
<dbReference type="STRING" id="269800.Tfu_2739"/>
<dbReference type="KEGG" id="tfu:Tfu_2739"/>
<dbReference type="eggNOG" id="COG0456">
    <property type="taxonomic scope" value="Bacteria"/>
</dbReference>
<dbReference type="HOGENOM" id="CLU_068014_0_0_11"/>
<dbReference type="OrthoDB" id="3208058at2"/>
<dbReference type="GO" id="GO:0035447">
    <property type="term" value="F:mycothiol synthase activity"/>
    <property type="evidence" value="ECO:0007669"/>
    <property type="project" value="UniProtKB-UniRule"/>
</dbReference>
<dbReference type="GO" id="GO:0010125">
    <property type="term" value="P:mycothiol biosynthetic process"/>
    <property type="evidence" value="ECO:0007669"/>
    <property type="project" value="UniProtKB-UniRule"/>
</dbReference>
<dbReference type="CDD" id="cd04301">
    <property type="entry name" value="NAT_SF"/>
    <property type="match status" value="2"/>
</dbReference>
<dbReference type="Gene3D" id="3.40.630.30">
    <property type="match status" value="1"/>
</dbReference>
<dbReference type="HAMAP" id="MF_01698">
    <property type="entry name" value="MshD"/>
    <property type="match status" value="1"/>
</dbReference>
<dbReference type="InterPro" id="IPR016181">
    <property type="entry name" value="Acyl_CoA_acyltransferase"/>
</dbReference>
<dbReference type="InterPro" id="IPR050832">
    <property type="entry name" value="Bact_Acetyltransf"/>
</dbReference>
<dbReference type="InterPro" id="IPR000182">
    <property type="entry name" value="GNAT_dom"/>
</dbReference>
<dbReference type="InterPro" id="IPR017813">
    <property type="entry name" value="Mycothiol_AcTrfase"/>
</dbReference>
<dbReference type="NCBIfam" id="TIGR03448">
    <property type="entry name" value="mycothiol_MshD"/>
    <property type="match status" value="1"/>
</dbReference>
<dbReference type="PANTHER" id="PTHR43877:SF1">
    <property type="entry name" value="ACETYLTRANSFERASE"/>
    <property type="match status" value="1"/>
</dbReference>
<dbReference type="PANTHER" id="PTHR43877">
    <property type="entry name" value="AMINOALKYLPHOSPHONATE N-ACETYLTRANSFERASE-RELATED-RELATED"/>
    <property type="match status" value="1"/>
</dbReference>
<dbReference type="Pfam" id="PF00583">
    <property type="entry name" value="Acetyltransf_1"/>
    <property type="match status" value="1"/>
</dbReference>
<dbReference type="Pfam" id="PF13508">
    <property type="entry name" value="Acetyltransf_7"/>
    <property type="match status" value="1"/>
</dbReference>
<dbReference type="PIRSF" id="PIRSF021524">
    <property type="entry name" value="MSH_acetyltransferase"/>
    <property type="match status" value="1"/>
</dbReference>
<dbReference type="SUPFAM" id="SSF55729">
    <property type="entry name" value="Acyl-CoA N-acyltransferases (Nat)"/>
    <property type="match status" value="1"/>
</dbReference>
<dbReference type="PROSITE" id="PS51186">
    <property type="entry name" value="GNAT"/>
    <property type="match status" value="2"/>
</dbReference>
<comment type="function">
    <text evidence="1">Catalyzes the transfer of acetyl from acetyl-CoA to desacetylmycothiol (Cys-GlcN-Ins) to form mycothiol.</text>
</comment>
<comment type="catalytic activity">
    <reaction evidence="1">
        <text>1D-myo-inositol 2-(L-cysteinylamino)-2-deoxy-alpha-D-glucopyranoside + acetyl-CoA = mycothiol + CoA + H(+)</text>
        <dbReference type="Rhea" id="RHEA:26172"/>
        <dbReference type="ChEBI" id="CHEBI:15378"/>
        <dbReference type="ChEBI" id="CHEBI:16768"/>
        <dbReference type="ChEBI" id="CHEBI:57287"/>
        <dbReference type="ChEBI" id="CHEBI:57288"/>
        <dbReference type="ChEBI" id="CHEBI:58887"/>
        <dbReference type="EC" id="2.3.1.189"/>
    </reaction>
</comment>
<comment type="subunit">
    <text evidence="1">Monomer.</text>
</comment>
<comment type="similarity">
    <text evidence="1">Belongs to the acetyltransferase family. MshD subfamily.</text>
</comment>
<keyword id="KW-0012">Acyltransferase</keyword>
<keyword id="KW-0677">Repeat</keyword>
<keyword id="KW-0808">Transferase</keyword>
<evidence type="ECO:0000255" key="1">
    <source>
        <dbReference type="HAMAP-Rule" id="MF_01698"/>
    </source>
</evidence>
<reference key="1">
    <citation type="journal article" date="2007" name="J. Bacteriol.">
        <title>Genome sequence and analysis of the soil cellulolytic actinomycete Thermobifida fusca YX.</title>
        <authorList>
            <person name="Lykidis A."/>
            <person name="Mavromatis K."/>
            <person name="Ivanova N."/>
            <person name="Anderson I."/>
            <person name="Land M."/>
            <person name="DiBartolo G."/>
            <person name="Martinez M."/>
            <person name="Lapidus A."/>
            <person name="Lucas S."/>
            <person name="Copeland A."/>
            <person name="Richardson P."/>
            <person name="Wilson D.B."/>
            <person name="Kyrpides N."/>
        </authorList>
    </citation>
    <scope>NUCLEOTIDE SEQUENCE [LARGE SCALE GENOMIC DNA]</scope>
    <source>
        <strain>YX</strain>
    </source>
</reference>
<proteinExistence type="inferred from homology"/>
<accession>Q47LA0</accession>
<organism>
    <name type="scientific">Thermobifida fusca (strain YX)</name>
    <dbReference type="NCBI Taxonomy" id="269800"/>
    <lineage>
        <taxon>Bacteria</taxon>
        <taxon>Bacillati</taxon>
        <taxon>Actinomycetota</taxon>
        <taxon>Actinomycetes</taxon>
        <taxon>Streptosporangiales</taxon>
        <taxon>Nocardiopsidaceae</taxon>
        <taxon>Thermobifida</taxon>
    </lineage>
</organism>
<gene>
    <name evidence="1" type="primary">mshD</name>
    <name type="ordered locus">Tfu_2739</name>
</gene>
<protein>
    <recommendedName>
        <fullName evidence="1">Mycothiol acetyltransferase</fullName>
        <shortName evidence="1">MSH acetyltransferase</shortName>
        <ecNumber evidence="1">2.3.1.189</ecNumber>
    </recommendedName>
    <alternativeName>
        <fullName evidence="1">Mycothiol synthase</fullName>
    </alternativeName>
</protein>
<sequence length="323" mass="35751">MSHILTTDTLSPEQVAAVLALAEAVRDADGVAALSEQTLLRVRHGARGRGRFHLAYVDAEQGRVLAGCAFAEVSPGEPDSAEVAVAPQWRRHGLGRRLLDELWAHADARGLRVWAHGDLAPARALAASAGLQRMRALWKMRLPLRGTDSAPAATLPEPALRPEVAQQVEIRTFRVGVDEQEWLRTNARAFADHPEQGALTLEDLQQREQEPWFDPEGFFVAVDRGSGRIAGFHWTKVHDDGAGLTDGEPVGEVYVVGVDPDWQGSGLGRVLTLRGLHHLRDRGLPWVLLYVDEENRPAVQLYRSLGFELWESDVMYGRVPEER</sequence>
<feature type="chain" id="PRO_0000400307" description="Mycothiol acetyltransferase">
    <location>
        <begin position="1"/>
        <end position="323"/>
    </location>
</feature>
<feature type="domain" description="N-acetyltransferase 1" evidence="1">
    <location>
        <begin position="5"/>
        <end position="145"/>
    </location>
</feature>
<feature type="domain" description="N-acetyltransferase 2" evidence="1">
    <location>
        <begin position="168"/>
        <end position="323"/>
    </location>
</feature>
<feature type="binding site" evidence="1">
    <location>
        <position position="36"/>
    </location>
    <ligand>
        <name>1D-myo-inositol 2-(L-cysteinylamino)-2-deoxy-alpha-D-glucopyranoside</name>
        <dbReference type="ChEBI" id="CHEBI:58887"/>
    </ligand>
</feature>
<feature type="binding site" evidence="1">
    <location>
        <begin position="83"/>
        <end position="85"/>
    </location>
    <ligand>
        <name>acetyl-CoA</name>
        <dbReference type="ChEBI" id="CHEBI:57288"/>
        <label>1</label>
    </ligand>
</feature>
<feature type="binding site" evidence="1">
    <location>
        <position position="195"/>
    </location>
    <ligand>
        <name>1D-myo-inositol 2-(L-cysteinylamino)-2-deoxy-alpha-D-glucopyranoside</name>
        <dbReference type="ChEBI" id="CHEBI:58887"/>
    </ligand>
</feature>
<feature type="binding site" evidence="1">
    <location>
        <position position="236"/>
    </location>
    <ligand>
        <name>1D-myo-inositol 2-(L-cysteinylamino)-2-deoxy-alpha-D-glucopyranoside</name>
        <dbReference type="ChEBI" id="CHEBI:58887"/>
    </ligand>
</feature>
<feature type="binding site" evidence="1">
    <location>
        <position position="252"/>
    </location>
    <ligand>
        <name>1D-myo-inositol 2-(L-cysteinylamino)-2-deoxy-alpha-D-glucopyranoside</name>
        <dbReference type="ChEBI" id="CHEBI:58887"/>
    </ligand>
</feature>
<feature type="binding site" evidence="1">
    <location>
        <begin position="256"/>
        <end position="258"/>
    </location>
    <ligand>
        <name>acetyl-CoA</name>
        <dbReference type="ChEBI" id="CHEBI:57288"/>
        <label>2</label>
    </ligand>
</feature>
<feature type="binding site" evidence="1">
    <location>
        <begin position="263"/>
        <end position="269"/>
    </location>
    <ligand>
        <name>acetyl-CoA</name>
        <dbReference type="ChEBI" id="CHEBI:57288"/>
        <label>2</label>
    </ligand>
</feature>
<feature type="binding site" evidence="1">
    <location>
        <position position="290"/>
    </location>
    <ligand>
        <name>1D-myo-inositol 2-(L-cysteinylamino)-2-deoxy-alpha-D-glucopyranoside</name>
        <dbReference type="ChEBI" id="CHEBI:58887"/>
    </ligand>
</feature>
<feature type="binding site" evidence="1">
    <location>
        <begin position="295"/>
        <end position="300"/>
    </location>
    <ligand>
        <name>acetyl-CoA</name>
        <dbReference type="ChEBI" id="CHEBI:57288"/>
        <label>2</label>
    </ligand>
</feature>